<protein>
    <recommendedName>
        <fullName evidence="1">Large ribosomal subunit protein uL18</fullName>
    </recommendedName>
    <alternativeName>
        <fullName evidence="2">50S ribosomal protein L18</fullName>
    </alternativeName>
</protein>
<name>RL18_CALS8</name>
<feature type="chain" id="PRO_1000053003" description="Large ribosomal subunit protein uL18">
    <location>
        <begin position="1"/>
        <end position="124"/>
    </location>
</feature>
<reference key="1">
    <citation type="submission" date="2007-04" db="EMBL/GenBank/DDBJ databases">
        <title>Genome sequence of the thermophilic hydrogen-producing bacterium Caldicellulosiruptor saccharolyticus DSM 8903.</title>
        <authorList>
            <person name="Copeland A."/>
            <person name="Lucas S."/>
            <person name="Lapidus A."/>
            <person name="Barry K."/>
            <person name="Detter J.C."/>
            <person name="Glavina del Rio T."/>
            <person name="Hammon N."/>
            <person name="Israni S."/>
            <person name="Dalin E."/>
            <person name="Tice H."/>
            <person name="Pitluck S."/>
            <person name="Kiss H."/>
            <person name="Brettin T."/>
            <person name="Bruce D."/>
            <person name="Han C."/>
            <person name="Schmutz J."/>
            <person name="Larimer F."/>
            <person name="Land M."/>
            <person name="Hauser L."/>
            <person name="Kyrpides N."/>
            <person name="Lykidis A."/>
            <person name="van de Werken H.J.G."/>
            <person name="Verhaart M.R.A."/>
            <person name="VanFossen A.L."/>
            <person name="Lewis D.L."/>
            <person name="Nichols J.D."/>
            <person name="Goorissen H.P."/>
            <person name="van Niel E.W.J."/>
            <person name="Stams F.J.M."/>
            <person name="Willquist K.U."/>
            <person name="Ward D.E."/>
            <person name="van der Oost J."/>
            <person name="Kelly R.M."/>
            <person name="Kengen S.M.W."/>
            <person name="Richardson P."/>
        </authorList>
    </citation>
    <scope>NUCLEOTIDE SEQUENCE [LARGE SCALE GENOMIC DNA]</scope>
    <source>
        <strain>ATCC 43494 / DSM 8903 / Tp8T 6331</strain>
    </source>
</reference>
<accession>A4XLR4</accession>
<sequence>MGLYKKVNRNEKRLIRHKRIRKKVFGTAERPRLCVYKSLKYIYAQIIDDEKGHTLVAASSLEPEIKSRLTSTKSIEAAQYIGRVIAERAKEKGITKVVFDRGGYPYHGRVKALADAAREAGLEF</sequence>
<comment type="function">
    <text evidence="1">This is one of the proteins that bind and probably mediate the attachment of the 5S RNA into the large ribosomal subunit, where it forms part of the central protuberance.</text>
</comment>
<comment type="subunit">
    <text evidence="1">Part of the 50S ribosomal subunit; part of the 5S rRNA/L5/L18/L25 subcomplex. Contacts the 5S and 23S rRNAs.</text>
</comment>
<comment type="similarity">
    <text evidence="1">Belongs to the universal ribosomal protein uL18 family.</text>
</comment>
<evidence type="ECO:0000255" key="1">
    <source>
        <dbReference type="HAMAP-Rule" id="MF_01337"/>
    </source>
</evidence>
<evidence type="ECO:0000305" key="2"/>
<proteinExistence type="inferred from homology"/>
<gene>
    <name evidence="1" type="primary">rplR</name>
    <name type="ordered locus">Csac_2271</name>
</gene>
<keyword id="KW-0687">Ribonucleoprotein</keyword>
<keyword id="KW-0689">Ribosomal protein</keyword>
<keyword id="KW-0694">RNA-binding</keyword>
<keyword id="KW-0699">rRNA-binding</keyword>
<dbReference type="EMBL" id="CP000679">
    <property type="protein sequence ID" value="ABP67849.2"/>
    <property type="molecule type" value="Genomic_DNA"/>
</dbReference>
<dbReference type="SMR" id="A4XLR4"/>
<dbReference type="STRING" id="351627.Csac_2271"/>
<dbReference type="KEGG" id="csc:Csac_2271"/>
<dbReference type="eggNOG" id="COG0256">
    <property type="taxonomic scope" value="Bacteria"/>
</dbReference>
<dbReference type="HOGENOM" id="CLU_098841_0_1_9"/>
<dbReference type="OrthoDB" id="9810939at2"/>
<dbReference type="Proteomes" id="UP000000256">
    <property type="component" value="Chromosome"/>
</dbReference>
<dbReference type="GO" id="GO:0022625">
    <property type="term" value="C:cytosolic large ribosomal subunit"/>
    <property type="evidence" value="ECO:0007669"/>
    <property type="project" value="TreeGrafter"/>
</dbReference>
<dbReference type="GO" id="GO:0008097">
    <property type="term" value="F:5S rRNA binding"/>
    <property type="evidence" value="ECO:0007669"/>
    <property type="project" value="TreeGrafter"/>
</dbReference>
<dbReference type="GO" id="GO:0003735">
    <property type="term" value="F:structural constituent of ribosome"/>
    <property type="evidence" value="ECO:0007669"/>
    <property type="project" value="InterPro"/>
</dbReference>
<dbReference type="GO" id="GO:0006412">
    <property type="term" value="P:translation"/>
    <property type="evidence" value="ECO:0007669"/>
    <property type="project" value="UniProtKB-UniRule"/>
</dbReference>
<dbReference type="CDD" id="cd00432">
    <property type="entry name" value="Ribosomal_L18_L5e"/>
    <property type="match status" value="1"/>
</dbReference>
<dbReference type="FunFam" id="3.30.420.100:FF:000001">
    <property type="entry name" value="50S ribosomal protein L18"/>
    <property type="match status" value="1"/>
</dbReference>
<dbReference type="Gene3D" id="3.30.420.100">
    <property type="match status" value="1"/>
</dbReference>
<dbReference type="HAMAP" id="MF_01337_B">
    <property type="entry name" value="Ribosomal_uL18_B"/>
    <property type="match status" value="1"/>
</dbReference>
<dbReference type="InterPro" id="IPR004389">
    <property type="entry name" value="Ribosomal_uL18_bac-type"/>
</dbReference>
<dbReference type="InterPro" id="IPR005484">
    <property type="entry name" value="Ribosomal_uL18_bac/euk"/>
</dbReference>
<dbReference type="NCBIfam" id="TIGR00060">
    <property type="entry name" value="L18_bact"/>
    <property type="match status" value="1"/>
</dbReference>
<dbReference type="PANTHER" id="PTHR12899">
    <property type="entry name" value="39S RIBOSOMAL PROTEIN L18, MITOCHONDRIAL"/>
    <property type="match status" value="1"/>
</dbReference>
<dbReference type="PANTHER" id="PTHR12899:SF3">
    <property type="entry name" value="LARGE RIBOSOMAL SUBUNIT PROTEIN UL18M"/>
    <property type="match status" value="1"/>
</dbReference>
<dbReference type="Pfam" id="PF00861">
    <property type="entry name" value="Ribosomal_L18p"/>
    <property type="match status" value="1"/>
</dbReference>
<dbReference type="SUPFAM" id="SSF53137">
    <property type="entry name" value="Translational machinery components"/>
    <property type="match status" value="1"/>
</dbReference>
<organism>
    <name type="scientific">Caldicellulosiruptor saccharolyticus (strain ATCC 43494 / DSM 8903 / Tp8T 6331)</name>
    <dbReference type="NCBI Taxonomy" id="351627"/>
    <lineage>
        <taxon>Bacteria</taxon>
        <taxon>Bacillati</taxon>
        <taxon>Bacillota</taxon>
        <taxon>Bacillota incertae sedis</taxon>
        <taxon>Caldicellulosiruptorales</taxon>
        <taxon>Caldicellulosiruptoraceae</taxon>
        <taxon>Caldicellulosiruptor</taxon>
    </lineage>
</organism>